<proteinExistence type="evidence at protein level"/>
<evidence type="ECO:0000250" key="1"/>
<evidence type="ECO:0000255" key="2"/>
<evidence type="ECO:0000256" key="3">
    <source>
        <dbReference type="SAM" id="MobiDB-lite"/>
    </source>
</evidence>
<evidence type="ECO:0000269" key="4">
    <source>
    </source>
</evidence>
<evidence type="ECO:0000269" key="5">
    <source>
    </source>
</evidence>
<evidence type="ECO:0000269" key="6">
    <source>
    </source>
</evidence>
<evidence type="ECO:0000269" key="7">
    <source>
    </source>
</evidence>
<evidence type="ECO:0000269" key="8">
    <source>
    </source>
</evidence>
<evidence type="ECO:0000269" key="9">
    <source>
    </source>
</evidence>
<evidence type="ECO:0000269" key="10">
    <source>
    </source>
</evidence>
<evidence type="ECO:0000269" key="11">
    <source>
    </source>
</evidence>
<evidence type="ECO:0000269" key="12">
    <source>
    </source>
</evidence>
<evidence type="ECO:0000269" key="13">
    <source>
    </source>
</evidence>
<evidence type="ECO:0000305" key="14"/>
<evidence type="ECO:0007829" key="15">
    <source>
        <dbReference type="PDB" id="5CTD"/>
    </source>
</evidence>
<organism>
    <name type="scientific">Homo sapiens</name>
    <name type="common">Human</name>
    <dbReference type="NCBI Taxonomy" id="9606"/>
    <lineage>
        <taxon>Eukaryota</taxon>
        <taxon>Metazoa</taxon>
        <taxon>Chordata</taxon>
        <taxon>Craniata</taxon>
        <taxon>Vertebrata</taxon>
        <taxon>Euteleostomi</taxon>
        <taxon>Mammalia</taxon>
        <taxon>Eutheria</taxon>
        <taxon>Euarchontoglires</taxon>
        <taxon>Primates</taxon>
        <taxon>Haplorrhini</taxon>
        <taxon>Catarrhini</taxon>
        <taxon>Hominidae</taxon>
        <taxon>Homo</taxon>
    </lineage>
</organism>
<comment type="function">
    <text>Structural component of hyaline cartilage and vitreous of the eye.</text>
</comment>
<comment type="subunit">
    <text>Heterotrimer of an alpha 1(IX), an alpha 2(IX) and an alpha 3(IX) chain.</text>
</comment>
<comment type="subcellular location">
    <subcellularLocation>
        <location evidence="1">Secreted</location>
        <location evidence="1">Extracellular space</location>
        <location evidence="1">Extracellular matrix</location>
    </subcellularLocation>
</comment>
<comment type="PTM">
    <text>Covalently linked to the telopeptides of type II collagen by lysine-derived cross-links.</text>
</comment>
<comment type="PTM">
    <text>Prolines at the third position of the tripeptide repeating unit (G-X-Y) are hydroxylated in some or all of the chains.</text>
</comment>
<comment type="disease" evidence="4 9">
    <disease id="DI-00787">
        <name>Multiple epiphyseal dysplasia 3</name>
        <acronym>EDM3</acronym>
        <description>A generalized skeletal dysplasia associated with significant morbidity. Joint pain, joint deformity, waddling gait, and short stature are the main clinical signs and symptoms. Radiological examination of the skeleton shows delayed, irregular mineralization of the epiphyseal ossification centers and of the centers of the carpal and tarsal bones. Multiple epiphyseal dysplasia is broadly categorized into the more severe Fairbank and the milder Ribbing types. The Fairbank type is characterized by shortness of stature, short and stubby fingers, small epiphyses in several joints, including the knee, ankle, hand, and hip. The Ribbing type is confined predominantly to the hip joints and is characterized by hands that are normal and stature that is normal or near-normal.</description>
        <dbReference type="MIM" id="600969"/>
    </disease>
    <text>The disease is caused by variants affecting the gene represented in this entry.</text>
</comment>
<comment type="disease" evidence="6 9">
    <disease id="DI-01829">
        <name>Intervertebral disc disease</name>
        <acronym>IDD</acronym>
        <description>A common musculo-skeletal disorder caused by degeneration of intervertebral disks of the lumbar spine. It results in low-back pain and unilateral leg pain.</description>
        <dbReference type="MIM" id="603932"/>
    </disease>
    <text evidence="6">Disease susceptibility is associated with variants affecting the gene represented in this entry. Susceptibility to intervertebral disk disease is conferred by variant p.Arg103Trp (PubMed:11308397).</text>
</comment>
<comment type="disease" evidence="8 10 11 12">
    <disease id="DI-06492">
        <name>Stickler syndrome 6</name>
        <acronym>STL6</acronym>
        <description>A form of Stickler syndrome, an inherited disorder that associates ocular signs with more or less complete forms of Pierre Robin sequence, bone disorders and sensorineural deafness. Ocular disorders may include juvenile cataract, myopia, strabismus, vitreoretinal or chorioretinal degeneration, retinal detachment, and chronic uveitis. Pierre Robin sequence includes an opening in the roof of the mouth (a cleft palate), a large tongue (macroglossia), and a small lower jaw (micrognathia). Bones are affected by slight platyspondyly and large, often defective epiphyses. Juvenile joint laxity is followed by early signs of arthrosis. The degree of hearing loss varies among affected individuals and may become more severe over time. STL6 is an autosomal recessive form characterized by early-onset progressive hearing loss and progressive myopia, with variable manifestation of facial dysmorphism and skeletal anomalies.</description>
        <dbReference type="MIM" id="620022"/>
    </disease>
    <text>The disease is caused by variants affecting the gene represented in this entry.</text>
</comment>
<comment type="similarity">
    <text evidence="14">Belongs to the fibril-associated collagens with interrupted helices (FACIT) family.</text>
</comment>
<sequence length="684" mass="63616">MAGPRACAPLLLLLLLGELLAAAGAQRVGLPGPPGPPGPPGKPGQDGIDGEAGPPGLPGPPGPKGAPGKPGKPGEAGLPGLPGVDGLTGRDGPPGPKGAPGERGSLGPPGPPGLGGKGLPGPPGEAGVSGPPGGIGLRGPPGPSGLPGLPGPPGPPGPPGHPGVLPEGATDLQCPSICPPGPPGPPGMPGFKGPTGYKGEQGEVGKDGEKGDPGPPGPAGLPGSVGLQGPRGLRGLPGPLGPPGDRGPIGFRGPPGIPGAPGKAGDRGERGPEGFRGPKGDLGRPGPKGTPGVAGPSGEPGMPGKDGQNGVPGLDGQKGEAGRNGAPGEKGPNGLPGLPGRAGSKGEKGERGRAGELGEAGPSGEPGVPGDAGMPGERGEAGHRGSAGALGPQGPPGAPGVRGFQGQKGSMGDPGLPGPQGLRGDVGDRGPGGAAGPKGDQGIAGSDGLPGDKGELGPSGLVGPKGESGSRGELGPKGTQGPNGTSGVQGVPGPPGPLGLQGVPGVPGITGKPGVPGKEASEQRIRELCGGMISEQIAQLAAHLRKPLAPGSIGRPGPAGPPGPPGPPGSIGHPGARGPPGYRGPTGELGDPGPRGNQGDRGDKGAAGAGLDGPEGDQGPQGPQGVPGTSKDGQDGAPGEPGPPGDPGLPGAIGAQGTPGICDTSACQGAVLGGVGEKSGSRSS</sequence>
<gene>
    <name type="primary">COL9A3</name>
</gene>
<dbReference type="EMBL" id="L41162">
    <property type="protein sequence ID" value="AAC41947.1"/>
    <property type="molecule type" value="mRNA"/>
</dbReference>
<dbReference type="EMBL" id="AF026802">
    <property type="protein sequence ID" value="AAD47357.1"/>
    <property type="molecule type" value="Genomic_DNA"/>
</dbReference>
<dbReference type="EMBL" id="AF026801">
    <property type="protein sequence ID" value="AAD47357.1"/>
    <property type="status" value="JOINED"/>
    <property type="molecule type" value="Genomic_DNA"/>
</dbReference>
<dbReference type="EMBL" id="AL035669">
    <property type="status" value="NOT_ANNOTATED_CDS"/>
    <property type="molecule type" value="Genomic_DNA"/>
</dbReference>
<dbReference type="EMBL" id="BC011705">
    <property type="protein sequence ID" value="AAH11705.1"/>
    <property type="molecule type" value="mRNA"/>
</dbReference>
<dbReference type="EMBL" id="X91013">
    <property type="protein sequence ID" value="CAA62495.1"/>
    <property type="molecule type" value="mRNA"/>
</dbReference>
<dbReference type="CCDS" id="CCDS13505.1"/>
<dbReference type="RefSeq" id="NP_001844.3">
    <property type="nucleotide sequence ID" value="NM_001853.3"/>
</dbReference>
<dbReference type="PDB" id="5CTD">
    <property type="method" value="X-ray"/>
    <property type="resolution" value="1.60 A"/>
    <property type="chains" value="C=517-553"/>
</dbReference>
<dbReference type="PDB" id="5CTI">
    <property type="method" value="X-ray"/>
    <property type="resolution" value="1.90 A"/>
    <property type="chains" value="C=517-553"/>
</dbReference>
<dbReference type="PDB" id="5CVA">
    <property type="method" value="X-ray"/>
    <property type="resolution" value="2.10 A"/>
    <property type="chains" value="C/F=517-553"/>
</dbReference>
<dbReference type="PDB" id="5CVB">
    <property type="method" value="X-ray"/>
    <property type="resolution" value="2.25 A"/>
    <property type="chains" value="C/F=517-553"/>
</dbReference>
<dbReference type="PDBsum" id="5CTD"/>
<dbReference type="PDBsum" id="5CTI"/>
<dbReference type="PDBsum" id="5CVA"/>
<dbReference type="PDBsum" id="5CVB"/>
<dbReference type="SMR" id="Q14050"/>
<dbReference type="BioGRID" id="107696">
    <property type="interactions" value="8"/>
</dbReference>
<dbReference type="ComplexPortal" id="CPX-1748">
    <property type="entry name" value="Collagen type IX trimer"/>
</dbReference>
<dbReference type="FunCoup" id="Q14050">
    <property type="interactions" value="554"/>
</dbReference>
<dbReference type="IntAct" id="Q14050">
    <property type="interactions" value="5"/>
</dbReference>
<dbReference type="STRING" id="9606.ENSP00000496793"/>
<dbReference type="GlyCosmos" id="Q14050">
    <property type="glycosylation" value="1 site, No reported glycans"/>
</dbReference>
<dbReference type="GlyGen" id="Q14050">
    <property type="glycosylation" value="2 sites"/>
</dbReference>
<dbReference type="iPTMnet" id="Q14050"/>
<dbReference type="PhosphoSitePlus" id="Q14050"/>
<dbReference type="BioMuta" id="COL9A3"/>
<dbReference type="DMDM" id="20137327"/>
<dbReference type="jPOST" id="Q14050"/>
<dbReference type="MassIVE" id="Q14050"/>
<dbReference type="PaxDb" id="9606-ENSP00000341640"/>
<dbReference type="PeptideAtlas" id="Q14050"/>
<dbReference type="ProteomicsDB" id="59803"/>
<dbReference type="Antibodypedia" id="29570">
    <property type="antibodies" value="177 antibodies from 24 providers"/>
</dbReference>
<dbReference type="DNASU" id="1299"/>
<dbReference type="Ensembl" id="ENST00000649368.1">
    <property type="protein sequence ID" value="ENSP00000496793.1"/>
    <property type="gene ID" value="ENSG00000092758.18"/>
</dbReference>
<dbReference type="GeneID" id="1299"/>
<dbReference type="KEGG" id="hsa:1299"/>
<dbReference type="MANE-Select" id="ENST00000649368.1">
    <property type="protein sequence ID" value="ENSP00000496793.1"/>
    <property type="RefSeq nucleotide sequence ID" value="NM_001853.4"/>
    <property type="RefSeq protein sequence ID" value="NP_001844.3"/>
</dbReference>
<dbReference type="UCSC" id="uc002ydm.3">
    <property type="organism name" value="human"/>
</dbReference>
<dbReference type="AGR" id="HGNC:2219"/>
<dbReference type="CTD" id="1299"/>
<dbReference type="DisGeNET" id="1299"/>
<dbReference type="GeneCards" id="COL9A3"/>
<dbReference type="GeneReviews" id="COL9A3"/>
<dbReference type="HGNC" id="HGNC:2219">
    <property type="gene designation" value="COL9A3"/>
</dbReference>
<dbReference type="HPA" id="ENSG00000092758">
    <property type="expression patterns" value="Tissue enhanced (brain)"/>
</dbReference>
<dbReference type="MalaCards" id="COL9A3"/>
<dbReference type="MIM" id="120270">
    <property type="type" value="gene"/>
</dbReference>
<dbReference type="MIM" id="600969">
    <property type="type" value="phenotype"/>
</dbReference>
<dbReference type="MIM" id="603932">
    <property type="type" value="phenotype"/>
</dbReference>
<dbReference type="MIM" id="620022">
    <property type="type" value="phenotype"/>
</dbReference>
<dbReference type="neXtProt" id="NX_Q14050"/>
<dbReference type="OpenTargets" id="ENSG00000092758"/>
<dbReference type="Orphanet" id="250984">
    <property type="disease" value="Autosomal recessive Stickler syndrome"/>
</dbReference>
<dbReference type="Orphanet" id="166002">
    <property type="disease" value="Multiple epiphyseal dysplasia due to collagen 9 anomaly"/>
</dbReference>
<dbReference type="PharmGKB" id="PA26735"/>
<dbReference type="VEuPathDB" id="HostDB:ENSG00000092758"/>
<dbReference type="eggNOG" id="KOG3544">
    <property type="taxonomic scope" value="Eukaryota"/>
</dbReference>
<dbReference type="GeneTree" id="ENSGT00940000163687"/>
<dbReference type="HOGENOM" id="CLU_001074_18_2_1"/>
<dbReference type="InParanoid" id="Q14050"/>
<dbReference type="OMA" id="MINEQIA"/>
<dbReference type="OrthoDB" id="9451878at2759"/>
<dbReference type="PAN-GO" id="Q14050">
    <property type="GO annotations" value="7 GO annotations based on evolutionary models"/>
</dbReference>
<dbReference type="PhylomeDB" id="Q14050"/>
<dbReference type="PathwayCommons" id="Q14050"/>
<dbReference type="Reactome" id="R-HSA-1442490">
    <property type="pathway name" value="Collagen degradation"/>
</dbReference>
<dbReference type="Reactome" id="R-HSA-1650814">
    <property type="pathway name" value="Collagen biosynthesis and modifying enzymes"/>
</dbReference>
<dbReference type="Reactome" id="R-HSA-186797">
    <property type="pathway name" value="Signaling by PDGF"/>
</dbReference>
<dbReference type="Reactome" id="R-HSA-2022090">
    <property type="pathway name" value="Assembly of collagen fibrils and other multimeric structures"/>
</dbReference>
<dbReference type="Reactome" id="R-HSA-216083">
    <property type="pathway name" value="Integrin cell surface interactions"/>
</dbReference>
<dbReference type="Reactome" id="R-HSA-3000178">
    <property type="pathway name" value="ECM proteoglycans"/>
</dbReference>
<dbReference type="Reactome" id="R-HSA-419037">
    <property type="pathway name" value="NCAM1 interactions"/>
</dbReference>
<dbReference type="Reactome" id="R-HSA-8948216">
    <property type="pathway name" value="Collagen chain trimerization"/>
</dbReference>
<dbReference type="SignaLink" id="Q14050"/>
<dbReference type="SIGNOR" id="Q14050"/>
<dbReference type="BioGRID-ORCS" id="1299">
    <property type="hits" value="16 hits in 1145 CRISPR screens"/>
</dbReference>
<dbReference type="ChiTaRS" id="COL9A3">
    <property type="organism name" value="human"/>
</dbReference>
<dbReference type="GeneWiki" id="COL9A3"/>
<dbReference type="GenomeRNAi" id="1299"/>
<dbReference type="Pharos" id="Q14050">
    <property type="development level" value="Tbio"/>
</dbReference>
<dbReference type="PRO" id="PR:Q14050"/>
<dbReference type="Proteomes" id="UP000005640">
    <property type="component" value="Chromosome 20"/>
</dbReference>
<dbReference type="RNAct" id="Q14050">
    <property type="molecule type" value="protein"/>
</dbReference>
<dbReference type="Bgee" id="ENSG00000092758">
    <property type="expression patterns" value="Expressed in tibia and 150 other cell types or tissues"/>
</dbReference>
<dbReference type="ExpressionAtlas" id="Q14050">
    <property type="expression patterns" value="baseline and differential"/>
</dbReference>
<dbReference type="GO" id="GO:0005604">
    <property type="term" value="C:basement membrane"/>
    <property type="evidence" value="ECO:0000318"/>
    <property type="project" value="GO_Central"/>
</dbReference>
<dbReference type="GO" id="GO:0005594">
    <property type="term" value="C:collagen type IX trimer"/>
    <property type="evidence" value="ECO:0000314"/>
    <property type="project" value="BHF-UCL"/>
</dbReference>
<dbReference type="GO" id="GO:0062023">
    <property type="term" value="C:collagen-containing extracellular matrix"/>
    <property type="evidence" value="ECO:0007005"/>
    <property type="project" value="BHF-UCL"/>
</dbReference>
<dbReference type="GO" id="GO:0005788">
    <property type="term" value="C:endoplasmic reticulum lumen"/>
    <property type="evidence" value="ECO:0000304"/>
    <property type="project" value="Reactome"/>
</dbReference>
<dbReference type="GO" id="GO:0005576">
    <property type="term" value="C:extracellular region"/>
    <property type="evidence" value="ECO:0000304"/>
    <property type="project" value="Reactome"/>
</dbReference>
<dbReference type="GO" id="GO:0005615">
    <property type="term" value="C:extracellular space"/>
    <property type="evidence" value="ECO:0000318"/>
    <property type="project" value="GO_Central"/>
</dbReference>
<dbReference type="GO" id="GO:0030020">
    <property type="term" value="F:extracellular matrix structural constituent conferring tensile strength"/>
    <property type="evidence" value="ECO:0000318"/>
    <property type="project" value="GO_Central"/>
</dbReference>
<dbReference type="GO" id="GO:0042803">
    <property type="term" value="F:protein homodimerization activity"/>
    <property type="evidence" value="ECO:0000353"/>
    <property type="project" value="BHF-UCL"/>
</dbReference>
<dbReference type="InterPro" id="IPR008160">
    <property type="entry name" value="Collagen"/>
</dbReference>
<dbReference type="InterPro" id="IPR050149">
    <property type="entry name" value="Collagen_superfamily"/>
</dbReference>
<dbReference type="PANTHER" id="PTHR24023:SF1112">
    <property type="entry name" value="COL_CUTICLE_N DOMAIN-CONTAINING PROTEIN-RELATED"/>
    <property type="match status" value="1"/>
</dbReference>
<dbReference type="PANTHER" id="PTHR24023">
    <property type="entry name" value="COLLAGEN ALPHA"/>
    <property type="match status" value="1"/>
</dbReference>
<dbReference type="Pfam" id="PF01391">
    <property type="entry name" value="Collagen"/>
    <property type="match status" value="5"/>
</dbReference>
<name>CO9A3_HUMAN</name>
<keyword id="KW-0002">3D-structure</keyword>
<keyword id="KW-0176">Collagen</keyword>
<keyword id="KW-0209">Deafness</keyword>
<keyword id="KW-0225">Disease variant</keyword>
<keyword id="KW-0242">Dwarfism</keyword>
<keyword id="KW-0272">Extracellular matrix</keyword>
<keyword id="KW-0325">Glycoprotein</keyword>
<keyword id="KW-0379">Hydroxylation</keyword>
<keyword id="KW-1267">Proteomics identification</keyword>
<keyword id="KW-1185">Reference proteome</keyword>
<keyword id="KW-0677">Repeat</keyword>
<keyword id="KW-0964">Secreted</keyword>
<keyword id="KW-0732">Signal</keyword>
<keyword id="KW-0757">Stickler syndrome</keyword>
<reference key="1">
    <citation type="journal article" date="1995" name="Genomics">
        <title>Molecular cloning of the alpha 3 chain of human type IX collagen: linkage of the gene COL9A3 to chromosome 20q13.3.</title>
        <authorList>
            <person name="Brewton R.G."/>
            <person name="Wood B.M."/>
            <person name="Ren Z.-X."/>
            <person name="Gong Y."/>
            <person name="Tiller G.E."/>
            <person name="Warman M.L."/>
            <person name="Lee B."/>
            <person name="Horton W.A."/>
            <person name="Olsen B.R."/>
            <person name="Baker J.R."/>
            <person name="Mayne R."/>
        </authorList>
    </citation>
    <scope>NUCLEOTIDE SEQUENCE [MRNA]</scope>
    <scope>VARIANT GLU-435</scope>
    <source>
        <tissue>Cartilage</tissue>
    </source>
</reference>
<reference key="2">
    <citation type="journal article" date="1999" name="J. Biol. Chem.">
        <title>Complete sequence of the 23-kilobase human COL9A3 gene. Detection of Gly-X-Y triplet deletions that represent neutral variants.</title>
        <authorList>
            <person name="Paassilta P."/>
            <person name="Pihlajamaa T."/>
            <person name="Annunen S."/>
            <person name="Brewton R.G."/>
            <person name="Wood B.M."/>
            <person name="Johnson C.C."/>
            <person name="Liu J."/>
            <person name="Gong Y."/>
            <person name="Warman M.L."/>
            <person name="Prockop D.J."/>
            <person name="Mayne R."/>
            <person name="Ala-Kokko L."/>
        </authorList>
    </citation>
    <scope>NUCLEOTIDE SEQUENCE [GENOMIC DNA]</scope>
    <scope>VARIANTS 563-GLY--PRO-565 DEL AND 564-PRO--GLY-566 DEL</scope>
</reference>
<reference key="3">
    <citation type="journal article" date="2001" name="Nature">
        <title>The DNA sequence and comparative analysis of human chromosome 20.</title>
        <authorList>
            <person name="Deloukas P."/>
            <person name="Matthews L.H."/>
            <person name="Ashurst J.L."/>
            <person name="Burton J."/>
            <person name="Gilbert J.G.R."/>
            <person name="Jones M."/>
            <person name="Stavrides G."/>
            <person name="Almeida J.P."/>
            <person name="Babbage A.K."/>
            <person name="Bagguley C.L."/>
            <person name="Bailey J."/>
            <person name="Barlow K.F."/>
            <person name="Bates K.N."/>
            <person name="Beard L.M."/>
            <person name="Beare D.M."/>
            <person name="Beasley O.P."/>
            <person name="Bird C.P."/>
            <person name="Blakey S.E."/>
            <person name="Bridgeman A.M."/>
            <person name="Brown A.J."/>
            <person name="Buck D."/>
            <person name="Burrill W.D."/>
            <person name="Butler A.P."/>
            <person name="Carder C."/>
            <person name="Carter N.P."/>
            <person name="Chapman J.C."/>
            <person name="Clamp M."/>
            <person name="Clark G."/>
            <person name="Clark L.N."/>
            <person name="Clark S.Y."/>
            <person name="Clee C.M."/>
            <person name="Clegg S."/>
            <person name="Cobley V.E."/>
            <person name="Collier R.E."/>
            <person name="Connor R.E."/>
            <person name="Corby N.R."/>
            <person name="Coulson A."/>
            <person name="Coville G.J."/>
            <person name="Deadman R."/>
            <person name="Dhami P.D."/>
            <person name="Dunn M."/>
            <person name="Ellington A.G."/>
            <person name="Frankland J.A."/>
            <person name="Fraser A."/>
            <person name="French L."/>
            <person name="Garner P."/>
            <person name="Grafham D.V."/>
            <person name="Griffiths C."/>
            <person name="Griffiths M.N.D."/>
            <person name="Gwilliam R."/>
            <person name="Hall R.E."/>
            <person name="Hammond S."/>
            <person name="Harley J.L."/>
            <person name="Heath P.D."/>
            <person name="Ho S."/>
            <person name="Holden J.L."/>
            <person name="Howden P.J."/>
            <person name="Huckle E."/>
            <person name="Hunt A.R."/>
            <person name="Hunt S.E."/>
            <person name="Jekosch K."/>
            <person name="Johnson C.M."/>
            <person name="Johnson D."/>
            <person name="Kay M.P."/>
            <person name="Kimberley A.M."/>
            <person name="King A."/>
            <person name="Knights A."/>
            <person name="Laird G.K."/>
            <person name="Lawlor S."/>
            <person name="Lehvaeslaiho M.H."/>
            <person name="Leversha M.A."/>
            <person name="Lloyd C."/>
            <person name="Lloyd D.M."/>
            <person name="Lovell J.D."/>
            <person name="Marsh V.L."/>
            <person name="Martin S.L."/>
            <person name="McConnachie L.J."/>
            <person name="McLay K."/>
            <person name="McMurray A.A."/>
            <person name="Milne S.A."/>
            <person name="Mistry D."/>
            <person name="Moore M.J.F."/>
            <person name="Mullikin J.C."/>
            <person name="Nickerson T."/>
            <person name="Oliver K."/>
            <person name="Parker A."/>
            <person name="Patel R."/>
            <person name="Pearce T.A.V."/>
            <person name="Peck A.I."/>
            <person name="Phillimore B.J.C.T."/>
            <person name="Prathalingam S.R."/>
            <person name="Plumb R.W."/>
            <person name="Ramsay H."/>
            <person name="Rice C.M."/>
            <person name="Ross M.T."/>
            <person name="Scott C.E."/>
            <person name="Sehra H.K."/>
            <person name="Shownkeen R."/>
            <person name="Sims S."/>
            <person name="Skuce C.D."/>
            <person name="Smith M.L."/>
            <person name="Soderlund C."/>
            <person name="Steward C.A."/>
            <person name="Sulston J.E."/>
            <person name="Swann R.M."/>
            <person name="Sycamore N."/>
            <person name="Taylor R."/>
            <person name="Tee L."/>
            <person name="Thomas D.W."/>
            <person name="Thorpe A."/>
            <person name="Tracey A."/>
            <person name="Tromans A.C."/>
            <person name="Vaudin M."/>
            <person name="Wall M."/>
            <person name="Wallis J.M."/>
            <person name="Whitehead S.L."/>
            <person name="Whittaker P."/>
            <person name="Willey D.L."/>
            <person name="Williams L."/>
            <person name="Williams S.A."/>
            <person name="Wilming L."/>
            <person name="Wray P.W."/>
            <person name="Hubbard T."/>
            <person name="Durbin R.M."/>
            <person name="Bentley D.R."/>
            <person name="Beck S."/>
            <person name="Rogers J."/>
        </authorList>
    </citation>
    <scope>NUCLEOTIDE SEQUENCE [LARGE SCALE GENOMIC DNA]</scope>
</reference>
<reference key="4">
    <citation type="journal article" date="2004" name="Genome Res.">
        <title>The status, quality, and expansion of the NIH full-length cDNA project: the Mammalian Gene Collection (MGC).</title>
        <authorList>
            <consortium name="The MGC Project Team"/>
        </authorList>
    </citation>
    <scope>NUCLEOTIDE SEQUENCE [LARGE SCALE MRNA]</scope>
    <source>
        <tissue>Skin</tissue>
    </source>
</reference>
<reference key="5">
    <citation type="journal article" date="1997" name="Biochem. J.">
        <title>Developmental regulation of mRNA species for types II, IX and XI collagens during mouse embryogenesis.</title>
        <authorList>
            <person name="Peraelae M."/>
            <person name="Savontaus M."/>
            <person name="Metsaeranta M."/>
            <person name="Vuorio E."/>
        </authorList>
    </citation>
    <scope>NUCLEOTIDE SEQUENCE [MRNA] OF 522-667</scope>
    <source>
        <tissue>Cartilage</tissue>
    </source>
</reference>
<reference key="6">
    <citation type="journal article" date="1999" name="Am. J. Hum. Genet.">
        <title>COL9A3: A third locus for multiple epiphyseal dysplasia.</title>
        <authorList>
            <person name="Paassilta P."/>
            <person name="Lohiniva J."/>
            <person name="Annunen S."/>
            <person name="Bonaventure J."/>
            <person name="Le Merrer M."/>
            <person name="Pai L."/>
            <person name="Ala-Kokko L."/>
        </authorList>
    </citation>
    <scope>INVOLVEMENT IN EDM3</scope>
</reference>
<reference key="7">
    <citation type="journal article" date="1999" name="Am. J. Hum. Genet.">
        <authorList>
            <person name="Paassilta P."/>
            <person name="Lohiniva J."/>
            <person name="Annunen S."/>
            <person name="Bonaventure J."/>
            <person name="Le Merrer M."/>
            <person name="Pai L."/>
            <person name="Ala-Kokko L."/>
        </authorList>
    </citation>
    <scope>ERRATUM OF PUBMED:10090888</scope>
</reference>
<reference key="8">
    <citation type="journal article" date="2001" name="JAMA">
        <title>Identification of a novel common genetic risk factor for lumbar disk disease.</title>
        <authorList>
            <person name="Paassilta P."/>
            <person name="Lohiniva J."/>
            <person name="Goring H.H."/>
            <person name="Perala M."/>
            <person name="Raina S.S."/>
            <person name="Karppinen J."/>
            <person name="Hakala M."/>
            <person name="Palm T."/>
            <person name="Kroger H."/>
            <person name="Kaitila I."/>
            <person name="Vanharanta H."/>
            <person name="Ott J."/>
            <person name="Ala-Kokko L."/>
        </authorList>
    </citation>
    <scope>INVOLVEMENT IN SUSCEPTIBILITY TO IDD</scope>
</reference>
<reference key="9">
    <citation type="journal article" date="2014" name="Am. J. Med. Genet. A">
        <title>Autosomal recessive Stickler syndrome due to a loss of function mutation in the COL9A3 gene.</title>
        <authorList>
            <person name="Faletra F."/>
            <person name="D'Adamo A.P."/>
            <person name="Bruno I."/>
            <person name="Athanasakis E."/>
            <person name="Biskup S."/>
            <person name="Esposito L."/>
            <person name="Gasparini P."/>
        </authorList>
    </citation>
    <scope>INVOLVEMENT IN STL6</scope>
</reference>
<reference key="10">
    <citation type="journal article" date="2018" name="Am. J. Med. Genet. A">
        <title>Autosomal recessive Stickler syndrome resulting from a COL9A3 mutation.</title>
        <authorList>
            <consortium name="University of Washington Center for Mendelian Genomics"/>
            <person name="Hanson-Kahn A."/>
            <person name="Li B."/>
            <person name="Cohn D.H."/>
            <person name="Nickerson D.A."/>
            <person name="Bamshad M.J."/>
            <person name="Hudgins L."/>
        </authorList>
    </citation>
    <scope>INVOLVEMENT IN STL6</scope>
</reference>
<reference key="11">
    <citation type="journal article" date="2001" name="Am. J. Hum. Genet.">
        <title>A mutation in COL9A1 causes multiple epiphyseal dysplasia: further evidence for locus heterogeneity.</title>
        <authorList>
            <person name="Czarny-Ratajczak M."/>
            <person name="Lohiniva J."/>
            <person name="Rogala P."/>
            <person name="Kozlowski K."/>
            <person name="Peraelae M."/>
            <person name="Carter L."/>
            <person name="Spector T.D."/>
            <person name="Kolodziej L."/>
            <person name="Seppaenen U."/>
            <person name="Glazar R."/>
            <person name="Krolewski J."/>
            <person name="Latos-Bielenska A."/>
            <person name="Ala-Kokko L."/>
        </authorList>
    </citation>
    <scope>VARIANTS GLN-103; TRP-103; LEU-296; GLN-402 AND GLU-435</scope>
</reference>
<reference key="12">
    <citation type="journal article" date="2014" name="BMC Musculoskelet. Disord.">
        <title>Novel COL9A3 mutation in a family diagnosed with multiple epiphyseal dysplasia: a case report.</title>
        <authorList>
            <person name="Jeong C."/>
            <person name="Lee J.Y."/>
            <person name="Kim J."/>
            <person name="Chae H."/>
            <person name="Park H.I."/>
            <person name="Kim M."/>
            <person name="Kim O.H."/>
            <person name="Kim P."/>
            <person name="Lee Y.K."/>
            <person name="Jung J."/>
        </authorList>
    </citation>
    <scope>VARIANT EDM3 ASP-35</scope>
</reference>
<reference key="13">
    <citation type="journal article" date="2019" name="Am. J. Med. Genet. A">
        <title>Homozygous Type IX collagen variants (COL9A1, COL9A2, and COL9A3) causing recessive Stickler syndrome-Expanding the phenotype.</title>
        <authorList>
            <person name="Nixon T.R.W."/>
            <person name="Alexander P."/>
            <person name="Richards A."/>
            <person name="McNinch A."/>
            <person name="Bearcroft P.W.P."/>
            <person name="Cobben J."/>
            <person name="Snead M.P."/>
        </authorList>
    </citation>
    <scope>VARIANT STL6 471-ARG--SER-684 DEL</scope>
</reference>
<reference key="14">
    <citation type="journal article" date="2021" name="Mol. Genet. Genomic Med.">
        <title>Clinical and genetic characterization of autosomal recessive stickler syndrome caused by novel compound heterozygous mutations in the COL9A3 gene.</title>
        <authorList>
            <person name="Markova T."/>
            <person name="Sparber P."/>
            <person name="Borovikov A."/>
            <person name="Nagornova T."/>
            <person name="Dadali E."/>
        </authorList>
    </citation>
    <scope>VARIANTS STL6 90-ARG--SER-684 DEL AND 577-ARG--SER-684 DEL</scope>
</reference>
<feature type="signal peptide" evidence="2">
    <location>
        <begin position="1"/>
        <end position="25"/>
    </location>
</feature>
<feature type="chain" id="PRO_0000005848" description="Collagen alpha-3(IX) chain">
    <location>
        <begin position="26"/>
        <end position="684"/>
    </location>
</feature>
<feature type="region of interest" description="Disordered" evidence="3">
    <location>
        <begin position="26"/>
        <end position="521"/>
    </location>
</feature>
<feature type="region of interest" description="Triple-helical region 3 (COL3)">
    <location>
        <begin position="29"/>
        <end position="519"/>
    </location>
</feature>
<feature type="region of interest" description="Nonhelical region 3 (NC3)">
    <location>
        <begin position="520"/>
        <end position="550"/>
    </location>
</feature>
<feature type="region of interest" description="Disordered" evidence="3">
    <location>
        <begin position="548"/>
        <end position="665"/>
    </location>
</feature>
<feature type="region of interest" description="Triple-helical region 2 (COL2)">
    <location>
        <begin position="551"/>
        <end position="630"/>
    </location>
</feature>
<feature type="region of interest" description="Nonhelical region 2 (NC2)">
    <location>
        <begin position="631"/>
        <end position="632"/>
    </location>
</feature>
<feature type="region of interest" description="Triple-helical region 1 (COL1)">
    <location>
        <begin position="633"/>
        <end position="661"/>
    </location>
</feature>
<feature type="region of interest" description="Nonhelical region 1 (NC1)">
    <location>
        <begin position="662"/>
        <end position="684"/>
    </location>
</feature>
<feature type="short sequence motif" description="Cell attachment site" evidence="2">
    <location>
        <begin position="423"/>
        <end position="425"/>
    </location>
</feature>
<feature type="short sequence motif" description="Cell attachment site" evidence="2">
    <location>
        <begin position="601"/>
        <end position="603"/>
    </location>
</feature>
<feature type="compositionally biased region" description="Pro residues" evidence="3">
    <location>
        <begin position="31"/>
        <end position="42"/>
    </location>
</feature>
<feature type="compositionally biased region" description="Pro residues" evidence="3">
    <location>
        <begin position="55"/>
        <end position="64"/>
    </location>
</feature>
<feature type="compositionally biased region" description="Low complexity" evidence="3">
    <location>
        <begin position="66"/>
        <end position="82"/>
    </location>
</feature>
<feature type="compositionally biased region" description="Gly residues" evidence="3">
    <location>
        <begin position="130"/>
        <end position="139"/>
    </location>
</feature>
<feature type="compositionally biased region" description="Pro residues" evidence="3">
    <location>
        <begin position="140"/>
        <end position="161"/>
    </location>
</feature>
<feature type="compositionally biased region" description="Pro residues" evidence="3">
    <location>
        <begin position="177"/>
        <end position="188"/>
    </location>
</feature>
<feature type="compositionally biased region" description="Basic and acidic residues" evidence="3">
    <location>
        <begin position="200"/>
        <end position="212"/>
    </location>
</feature>
<feature type="compositionally biased region" description="Low complexity" evidence="3">
    <location>
        <begin position="221"/>
        <end position="237"/>
    </location>
</feature>
<feature type="compositionally biased region" description="Basic and acidic residues" evidence="3">
    <location>
        <begin position="264"/>
        <end position="282"/>
    </location>
</feature>
<feature type="compositionally biased region" description="Basic and acidic residues" evidence="3">
    <location>
        <begin position="344"/>
        <end position="356"/>
    </location>
</feature>
<feature type="compositionally biased region" description="Low complexity" evidence="3">
    <location>
        <begin position="498"/>
        <end position="507"/>
    </location>
</feature>
<feature type="compositionally biased region" description="Pro residues" evidence="3">
    <location>
        <begin position="558"/>
        <end position="568"/>
    </location>
</feature>
<feature type="compositionally biased region" description="Low complexity" evidence="3">
    <location>
        <begin position="570"/>
        <end position="586"/>
    </location>
</feature>
<feature type="compositionally biased region" description="Low complexity" evidence="3">
    <location>
        <begin position="617"/>
        <end position="628"/>
    </location>
</feature>
<feature type="glycosylation site" description="N-linked (GlcNAc...) asparagine" evidence="2">
    <location>
        <position position="483"/>
    </location>
</feature>
<feature type="sequence variant" id="VAR_072736" description="In EDM3; dbSNP:rs1390736361." evidence="9">
    <original>G</original>
    <variation>D</variation>
    <location>
        <position position="35"/>
    </location>
</feature>
<feature type="sequence variant" id="VAR_087540" description="In STL6." evidence="12">
    <location>
        <begin position="90"/>
        <end position="684"/>
    </location>
</feature>
<feature type="sequence variant" id="VAR_048808" description="In dbSNP:rs35908728.">
    <original>P</original>
    <variation>S</variation>
    <location>
        <position position="94"/>
    </location>
</feature>
<feature type="sequence variant" id="VAR_026467" description="In dbSNP:rs142639450." evidence="7">
    <original>R</original>
    <variation>Q</variation>
    <location>
        <position position="103"/>
    </location>
</feature>
<feature type="sequence variant" id="VAR_026468" description="Probable risk factor for intervertebral disk disease; dbSNP:rs61734651." evidence="7">
    <original>R</original>
    <variation>W</variation>
    <location>
        <position position="103"/>
    </location>
</feature>
<feature type="sequence variant" id="VAR_026469" description="In dbSNP:rs45628843." evidence="7">
    <original>P</original>
    <variation>L</variation>
    <location>
        <position position="296"/>
    </location>
</feature>
<feature type="sequence variant" id="VAR_026470" description="In dbSNP:rs373519549." evidence="7">
    <original>R</original>
    <variation>Q</variation>
    <location>
        <position position="402"/>
    </location>
</feature>
<feature type="sequence variant" id="VAR_026471" description="In dbSNP:rs751557." evidence="7 13">
    <original>A</original>
    <variation>E</variation>
    <location>
        <position position="435"/>
    </location>
</feature>
<feature type="sequence variant" id="VAR_087541" description="In STL6." evidence="11">
    <location>
        <begin position="471"/>
        <end position="684"/>
    </location>
</feature>
<feature type="sequence variant" id="VAR_012660" evidence="5">
    <location>
        <begin position="563"/>
        <end position="565"/>
    </location>
</feature>
<feature type="sequence variant" id="VAR_012661" evidence="5">
    <location>
        <begin position="564"/>
        <end position="566"/>
    </location>
</feature>
<feature type="sequence variant" id="VAR_087542" description="In STL6." evidence="12">
    <location>
        <begin position="577"/>
        <end position="684"/>
    </location>
</feature>
<feature type="sequence conflict" description="In Ref. 1; AAC41947 and 2; AAD47357." evidence="14" ref="1 2">
    <original>E</original>
    <variation>Q</variation>
    <location>
        <position position="18"/>
    </location>
</feature>
<feature type="sequence conflict" description="In Ref. 1; AAC41947." evidence="14" ref="1">
    <original>P</original>
    <variation>R</variation>
    <location>
        <position position="39"/>
    </location>
</feature>
<feature type="sequence conflict" description="In Ref. 1; AAC41947." evidence="14" ref="1">
    <original>S</original>
    <variation>P</variation>
    <location>
        <position position="144"/>
    </location>
</feature>
<feature type="sequence conflict" description="In Ref. 5; CAA62495." evidence="14" ref="5">
    <original>R</original>
    <variation>H</variation>
    <location>
        <position position="524"/>
    </location>
</feature>
<feature type="sequence conflict" description="In Ref. 5; CAA62495." evidence="14" ref="5">
    <original>A</original>
    <variation>T</variation>
    <location>
        <position position="576"/>
    </location>
</feature>
<feature type="helix" evidence="15">
    <location>
        <begin position="522"/>
        <end position="543"/>
    </location>
</feature>
<accession>Q14050</accession>
<accession>Q13681</accession>
<accession>Q9H4G9</accession>
<accession>Q9UPE2</accession>
<protein>
    <recommendedName>
        <fullName>Collagen alpha-3(IX) chain</fullName>
    </recommendedName>
</protein>